<keyword id="KW-1003">Cell membrane</keyword>
<keyword id="KW-0408">Iron</keyword>
<keyword id="KW-0472">Membrane</keyword>
<keyword id="KW-0812">Transmembrane</keyword>
<keyword id="KW-1133">Transmembrane helix</keyword>
<keyword id="KW-0813">Transport</keyword>
<protein>
    <recommendedName>
        <fullName>Probable heme-iron transport system permease protein IsdF</fullName>
    </recommendedName>
    <alternativeName>
        <fullName>Iron-regulated surface determinant protein F</fullName>
    </alternativeName>
    <alternativeName>
        <fullName>Staphylococcal iron-regulated protein G</fullName>
    </alternativeName>
</protein>
<feature type="chain" id="PRO_0000372462" description="Probable heme-iron transport system permease protein IsdF">
    <location>
        <begin position="1"/>
        <end position="322"/>
    </location>
</feature>
<feature type="transmembrane region" description="Helical" evidence="2">
    <location>
        <begin position="9"/>
        <end position="29"/>
    </location>
</feature>
<feature type="transmembrane region" description="Helical" evidence="2">
    <location>
        <begin position="61"/>
        <end position="81"/>
    </location>
</feature>
<feature type="transmembrane region" description="Helical" evidence="2">
    <location>
        <begin position="89"/>
        <end position="109"/>
    </location>
</feature>
<feature type="transmembrane region" description="Helical" evidence="2">
    <location>
        <begin position="114"/>
        <end position="134"/>
    </location>
</feature>
<feature type="transmembrane region" description="Helical" evidence="2">
    <location>
        <begin position="143"/>
        <end position="163"/>
    </location>
</feature>
<feature type="transmembrane region" description="Helical" evidence="2">
    <location>
        <begin position="179"/>
        <end position="199"/>
    </location>
</feature>
<feature type="transmembrane region" description="Helical" evidence="2">
    <location>
        <begin position="233"/>
        <end position="253"/>
    </location>
</feature>
<feature type="transmembrane region" description="Helical" evidence="2">
    <location>
        <begin position="267"/>
        <end position="287"/>
    </location>
</feature>
<feature type="transmembrane region" description="Helical" evidence="2">
    <location>
        <begin position="294"/>
        <end position="314"/>
    </location>
</feature>
<name>ISDF_STAAC</name>
<comment type="function">
    <text evidence="1">Part of the binding-protein-dependent transport system for heme-iron. Responsible for the translocation of the substrate across the membrane (By similarity).</text>
</comment>
<comment type="subcellular location">
    <subcellularLocation>
        <location evidence="3">Cell membrane</location>
        <topology evidence="3">Multi-pass membrane protein</topology>
    </subcellularLocation>
</comment>
<comment type="induction">
    <text evidence="1">Repressed by fur in the presence of iron.</text>
</comment>
<comment type="similarity">
    <text evidence="3">Belongs to the binding-protein-dependent transport system permease family. FecCD subfamily.</text>
</comment>
<comment type="sequence caution" evidence="3">
    <conflict type="erroneous initiation">
        <sequence resource="EMBL-CDS" id="AAW38023"/>
    </conflict>
</comment>
<dbReference type="EMBL" id="CP000046">
    <property type="protein sequence ID" value="AAW38023.1"/>
    <property type="status" value="ALT_INIT"/>
    <property type="molecule type" value="Genomic_DNA"/>
</dbReference>
<dbReference type="SMR" id="Q5HGV0"/>
<dbReference type="KEGG" id="sac:SACOL1144"/>
<dbReference type="HOGENOM" id="CLU_013016_1_1_9"/>
<dbReference type="Proteomes" id="UP000000530">
    <property type="component" value="Chromosome"/>
</dbReference>
<dbReference type="GO" id="GO:0005886">
    <property type="term" value="C:plasma membrane"/>
    <property type="evidence" value="ECO:0007669"/>
    <property type="project" value="UniProtKB-SubCell"/>
</dbReference>
<dbReference type="GO" id="GO:0022857">
    <property type="term" value="F:transmembrane transporter activity"/>
    <property type="evidence" value="ECO:0007669"/>
    <property type="project" value="InterPro"/>
</dbReference>
<dbReference type="GO" id="GO:0033214">
    <property type="term" value="P:siderophore-dependent iron import into cell"/>
    <property type="evidence" value="ECO:0007669"/>
    <property type="project" value="TreeGrafter"/>
</dbReference>
<dbReference type="CDD" id="cd06550">
    <property type="entry name" value="TM_ABC_iron-siderophores_like"/>
    <property type="match status" value="1"/>
</dbReference>
<dbReference type="FunFam" id="1.10.3470.10:FF:000001">
    <property type="entry name" value="Vitamin B12 ABC transporter permease BtuC"/>
    <property type="match status" value="1"/>
</dbReference>
<dbReference type="Gene3D" id="1.10.3470.10">
    <property type="entry name" value="ABC transporter involved in vitamin B12 uptake, BtuC"/>
    <property type="match status" value="1"/>
</dbReference>
<dbReference type="InterPro" id="IPR037294">
    <property type="entry name" value="ABC_BtuC-like"/>
</dbReference>
<dbReference type="InterPro" id="IPR000522">
    <property type="entry name" value="ABC_transptr_permease_BtuC"/>
</dbReference>
<dbReference type="PANTHER" id="PTHR30472">
    <property type="entry name" value="FERRIC ENTEROBACTIN TRANSPORT SYSTEM PERMEASE PROTEIN"/>
    <property type="match status" value="1"/>
</dbReference>
<dbReference type="PANTHER" id="PTHR30472:SF21">
    <property type="entry name" value="HEME-IRON TRANSPORT SYSTEM PERMEASE PROTEIN ISDF-RELATED"/>
    <property type="match status" value="1"/>
</dbReference>
<dbReference type="Pfam" id="PF01032">
    <property type="entry name" value="FecCD"/>
    <property type="match status" value="1"/>
</dbReference>
<dbReference type="SUPFAM" id="SSF81345">
    <property type="entry name" value="ABC transporter involved in vitamin B12 uptake, BtuC"/>
    <property type="match status" value="1"/>
</dbReference>
<gene>
    <name type="primary">isdF</name>
    <name type="synonym">sirG</name>
    <name type="ordered locus">SACOL1144</name>
</gene>
<evidence type="ECO:0000250" key="1"/>
<evidence type="ECO:0000255" key="2"/>
<evidence type="ECO:0000305" key="3"/>
<sequence length="322" mass="35175">MMIKNKKKLLFLCLLVILIATAYISFVTGTIKLSFNDLFTKFTTGSNEAVDSIIDLRLPRILIALMVGAMLAVSGALLQAALQNPLAEANIIGVSSGALIMRALCMLFIPQLYFYLPLLSFIGGLIPFLIIILLHSKFRFNAVSMILVGVALFVLLNGVLEILTQNPLMKIPQGLTMKIWSDVYILAVSALLGLILTLLLSPKLNLLNLDDIQARSIGFNIDRYRWLTGLLAVFLASATVAIVGQLAFLGIIVPHVVRKLVGGNYRVLIPFSTVIGAWLLLVADLLGRVIQPPLEIPANAILMIVGGPMLIYLICQSQRNRI</sequence>
<reference key="1">
    <citation type="journal article" date="2005" name="J. Bacteriol.">
        <title>Insights on evolution of virulence and resistance from the complete genome analysis of an early methicillin-resistant Staphylococcus aureus strain and a biofilm-producing methicillin-resistant Staphylococcus epidermidis strain.</title>
        <authorList>
            <person name="Gill S.R."/>
            <person name="Fouts D.E."/>
            <person name="Archer G.L."/>
            <person name="Mongodin E.F."/>
            <person name="DeBoy R.T."/>
            <person name="Ravel J."/>
            <person name="Paulsen I.T."/>
            <person name="Kolonay J.F."/>
            <person name="Brinkac L.M."/>
            <person name="Beanan M.J."/>
            <person name="Dodson R.J."/>
            <person name="Daugherty S.C."/>
            <person name="Madupu R."/>
            <person name="Angiuoli S.V."/>
            <person name="Durkin A.S."/>
            <person name="Haft D.H."/>
            <person name="Vamathevan J.J."/>
            <person name="Khouri H."/>
            <person name="Utterback T.R."/>
            <person name="Lee C."/>
            <person name="Dimitrov G."/>
            <person name="Jiang L."/>
            <person name="Qin H."/>
            <person name="Weidman J."/>
            <person name="Tran K."/>
            <person name="Kang K.H."/>
            <person name="Hance I.R."/>
            <person name="Nelson K.E."/>
            <person name="Fraser C.M."/>
        </authorList>
    </citation>
    <scope>NUCLEOTIDE SEQUENCE [LARGE SCALE GENOMIC DNA]</scope>
    <source>
        <strain>COL</strain>
    </source>
</reference>
<organism>
    <name type="scientific">Staphylococcus aureus (strain COL)</name>
    <dbReference type="NCBI Taxonomy" id="93062"/>
    <lineage>
        <taxon>Bacteria</taxon>
        <taxon>Bacillati</taxon>
        <taxon>Bacillota</taxon>
        <taxon>Bacilli</taxon>
        <taxon>Bacillales</taxon>
        <taxon>Staphylococcaceae</taxon>
        <taxon>Staphylococcus</taxon>
    </lineage>
</organism>
<proteinExistence type="inferred from homology"/>
<accession>Q5HGV0</accession>